<dbReference type="EC" id="2.8.1.-" evidence="1"/>
<dbReference type="EMBL" id="BX571860">
    <property type="protein sequence ID" value="CAE12721.1"/>
    <property type="molecule type" value="Genomic_DNA"/>
</dbReference>
<dbReference type="RefSeq" id="WP_011144812.1">
    <property type="nucleotide sequence ID" value="NC_005126.1"/>
</dbReference>
<dbReference type="SMR" id="Q7N9B7"/>
<dbReference type="STRING" id="243265.plu0426"/>
<dbReference type="GeneID" id="48846712"/>
<dbReference type="KEGG" id="plu:plu0426"/>
<dbReference type="eggNOG" id="COG1553">
    <property type="taxonomic scope" value="Bacteria"/>
</dbReference>
<dbReference type="HOGENOM" id="CLU_132095_0_0_6"/>
<dbReference type="OrthoDB" id="9787483at2"/>
<dbReference type="Proteomes" id="UP000002514">
    <property type="component" value="Chromosome"/>
</dbReference>
<dbReference type="GO" id="GO:1990228">
    <property type="term" value="C:sulfurtransferase complex"/>
    <property type="evidence" value="ECO:0007669"/>
    <property type="project" value="TreeGrafter"/>
</dbReference>
<dbReference type="GO" id="GO:0097163">
    <property type="term" value="F:sulfur carrier activity"/>
    <property type="evidence" value="ECO:0007669"/>
    <property type="project" value="TreeGrafter"/>
</dbReference>
<dbReference type="GO" id="GO:0016783">
    <property type="term" value="F:sulfurtransferase activity"/>
    <property type="evidence" value="ECO:0007669"/>
    <property type="project" value="UniProtKB-UniRule"/>
</dbReference>
<dbReference type="GO" id="GO:0002143">
    <property type="term" value="P:tRNA wobble position uridine thiolation"/>
    <property type="evidence" value="ECO:0007669"/>
    <property type="project" value="TreeGrafter"/>
</dbReference>
<dbReference type="FunFam" id="3.40.1260.10:FF:000001">
    <property type="entry name" value="Sulfurtransferase TusD"/>
    <property type="match status" value="1"/>
</dbReference>
<dbReference type="Gene3D" id="3.40.1260.10">
    <property type="entry name" value="DsrEFH-like"/>
    <property type="match status" value="1"/>
</dbReference>
<dbReference type="HAMAP" id="MF_00390">
    <property type="entry name" value="Thiourid_synth_D"/>
    <property type="match status" value="1"/>
</dbReference>
<dbReference type="InterPro" id="IPR027396">
    <property type="entry name" value="DsrEFH-like"/>
</dbReference>
<dbReference type="InterPro" id="IPR003787">
    <property type="entry name" value="Sulphur_relay_DsrE/F-like"/>
</dbReference>
<dbReference type="InterPro" id="IPR017463">
    <property type="entry name" value="Sulphur_relay_TusD/DsrE"/>
</dbReference>
<dbReference type="NCBIfam" id="NF001237">
    <property type="entry name" value="PRK00207.1"/>
    <property type="match status" value="1"/>
</dbReference>
<dbReference type="NCBIfam" id="TIGR03012">
    <property type="entry name" value="sulf_tusD_dsrE"/>
    <property type="match status" value="1"/>
</dbReference>
<dbReference type="PANTHER" id="PTHR34874">
    <property type="entry name" value="PROTEIN YCHN"/>
    <property type="match status" value="1"/>
</dbReference>
<dbReference type="PANTHER" id="PTHR34874:SF3">
    <property type="entry name" value="SULFURTRANSFERASE TUSD"/>
    <property type="match status" value="1"/>
</dbReference>
<dbReference type="Pfam" id="PF02635">
    <property type="entry name" value="DsrE"/>
    <property type="match status" value="1"/>
</dbReference>
<dbReference type="SUPFAM" id="SSF75169">
    <property type="entry name" value="DsrEFH-like"/>
    <property type="match status" value="1"/>
</dbReference>
<name>TUSD_PHOLL</name>
<proteinExistence type="inferred from homology"/>
<reference key="1">
    <citation type="journal article" date="2003" name="Nat. Biotechnol.">
        <title>The genome sequence of the entomopathogenic bacterium Photorhabdus luminescens.</title>
        <authorList>
            <person name="Duchaud E."/>
            <person name="Rusniok C."/>
            <person name="Frangeul L."/>
            <person name="Buchrieser C."/>
            <person name="Givaudan A."/>
            <person name="Taourit S."/>
            <person name="Bocs S."/>
            <person name="Boursaux-Eude C."/>
            <person name="Chandler M."/>
            <person name="Charles J.-F."/>
            <person name="Dassa E."/>
            <person name="Derose R."/>
            <person name="Derzelle S."/>
            <person name="Freyssinet G."/>
            <person name="Gaudriault S."/>
            <person name="Medigue C."/>
            <person name="Lanois A."/>
            <person name="Powell K."/>
            <person name="Siguier P."/>
            <person name="Vincent R."/>
            <person name="Wingate V."/>
            <person name="Zouine M."/>
            <person name="Glaser P."/>
            <person name="Boemare N."/>
            <person name="Danchin A."/>
            <person name="Kunst F."/>
        </authorList>
    </citation>
    <scope>NUCLEOTIDE SEQUENCE [LARGE SCALE GENOMIC DNA]</scope>
    <source>
        <strain>DSM 15139 / CIP 105565 / TT01</strain>
    </source>
</reference>
<comment type="function">
    <text evidence="1">Part of a sulfur-relay system required for 2-thiolation of 5-methylaminomethyl-2-thiouridine (mnm(5)s(2)U) at tRNA wobble positions. Accepts sulfur from TusA and transfers it in turn to TusE.</text>
</comment>
<comment type="subunit">
    <text evidence="1">Heterohexamer, formed by a dimer of trimers. The hexameric TusBCD complex contains 2 copies each of TusB, TusC and TusD. The TusBCD complex interacts with TusE.</text>
</comment>
<comment type="subcellular location">
    <subcellularLocation>
        <location evidence="1">Cytoplasm</location>
    </subcellularLocation>
</comment>
<comment type="similarity">
    <text evidence="1">Belongs to the DsrE/TusD family.</text>
</comment>
<gene>
    <name evidence="1" type="primary">tusD</name>
    <name type="ordered locus">plu0426</name>
</gene>
<evidence type="ECO:0000255" key="1">
    <source>
        <dbReference type="HAMAP-Rule" id="MF_00390"/>
    </source>
</evidence>
<organism>
    <name type="scientific">Photorhabdus laumondii subsp. laumondii (strain DSM 15139 / CIP 105565 / TT01)</name>
    <name type="common">Photorhabdus luminescens subsp. laumondii</name>
    <dbReference type="NCBI Taxonomy" id="243265"/>
    <lineage>
        <taxon>Bacteria</taxon>
        <taxon>Pseudomonadati</taxon>
        <taxon>Pseudomonadota</taxon>
        <taxon>Gammaproteobacteria</taxon>
        <taxon>Enterobacterales</taxon>
        <taxon>Morganellaceae</taxon>
        <taxon>Photorhabdus</taxon>
    </lineage>
</organism>
<protein>
    <recommendedName>
        <fullName evidence="1">Sulfurtransferase TusD</fullName>
        <ecNumber evidence="1">2.8.1.-</ecNumber>
    </recommendedName>
    <alternativeName>
        <fullName evidence="1">tRNA 2-thiouridine synthesizing protein D</fullName>
    </alternativeName>
</protein>
<accession>Q7N9B7</accession>
<feature type="chain" id="PRO_0000214730" description="Sulfurtransferase TusD">
    <location>
        <begin position="1"/>
        <end position="131"/>
    </location>
</feature>
<feature type="active site" description="Cysteine persulfide intermediate" evidence="1">
    <location>
        <position position="81"/>
    </location>
</feature>
<sequence length="131" mass="14290">MSSLSYCLLVTGPAYGTQQASSAYQFAQALITMGHKLNTVFFYREGVYNGNQLTSPASDEFDLVSAWQMMATEHRFSMHICIAAALRRGVIDAQQASELNLPVANLAEGFELSGLGTLAEAMLICDRVVQF</sequence>
<keyword id="KW-0963">Cytoplasm</keyword>
<keyword id="KW-1185">Reference proteome</keyword>
<keyword id="KW-0808">Transferase</keyword>
<keyword id="KW-0819">tRNA processing</keyword>